<evidence type="ECO:0000255" key="1">
    <source>
        <dbReference type="HAMAP-Rule" id="MF_01974"/>
    </source>
</evidence>
<reference key="1">
    <citation type="journal article" date="1997" name="Nature">
        <title>The complete genome sequence of the gastric pathogen Helicobacter pylori.</title>
        <authorList>
            <person name="Tomb J.-F."/>
            <person name="White O."/>
            <person name="Kerlavage A.R."/>
            <person name="Clayton R.A."/>
            <person name="Sutton G.G."/>
            <person name="Fleischmann R.D."/>
            <person name="Ketchum K.A."/>
            <person name="Klenk H.-P."/>
            <person name="Gill S.R."/>
            <person name="Dougherty B.A."/>
            <person name="Nelson K.E."/>
            <person name="Quackenbush J."/>
            <person name="Zhou L."/>
            <person name="Kirkness E.F."/>
            <person name="Peterson S.N."/>
            <person name="Loftus B.J."/>
            <person name="Richardson D.L."/>
            <person name="Dodson R.J."/>
            <person name="Khalak H.G."/>
            <person name="Glodek A."/>
            <person name="McKenney K."/>
            <person name="FitzGerald L.M."/>
            <person name="Lee N."/>
            <person name="Adams M.D."/>
            <person name="Hickey E.K."/>
            <person name="Berg D.E."/>
            <person name="Gocayne J.D."/>
            <person name="Utterback T.R."/>
            <person name="Peterson J.D."/>
            <person name="Kelley J.M."/>
            <person name="Cotton M.D."/>
            <person name="Weidman J.F."/>
            <person name="Fujii C."/>
            <person name="Bowman C."/>
            <person name="Watthey L."/>
            <person name="Wallin E."/>
            <person name="Hayes W.S."/>
            <person name="Borodovsky M."/>
            <person name="Karp P.D."/>
            <person name="Smith H.O."/>
            <person name="Fraser C.M."/>
            <person name="Venter J.C."/>
        </authorList>
    </citation>
    <scope>NUCLEOTIDE SEQUENCE [LARGE SCALE GENOMIC DNA]</scope>
    <source>
        <strain>ATCC 700392 / 26695</strain>
    </source>
</reference>
<gene>
    <name evidence="1" type="primary">map</name>
    <name type="ordered locus">HP_1299</name>
</gene>
<dbReference type="EC" id="3.4.11.18" evidence="1"/>
<dbReference type="EMBL" id="AE000511">
    <property type="protein sequence ID" value="AAD08340.1"/>
    <property type="molecule type" value="Genomic_DNA"/>
</dbReference>
<dbReference type="PIR" id="C64682">
    <property type="entry name" value="C64682"/>
</dbReference>
<dbReference type="RefSeq" id="NP_208091.1">
    <property type="nucleotide sequence ID" value="NC_000915.1"/>
</dbReference>
<dbReference type="RefSeq" id="WP_001018129.1">
    <property type="nucleotide sequence ID" value="NC_018939.1"/>
</dbReference>
<dbReference type="SMR" id="P56102"/>
<dbReference type="DIP" id="DIP-3487N"/>
<dbReference type="FunCoup" id="P56102">
    <property type="interactions" value="351"/>
</dbReference>
<dbReference type="IntAct" id="P56102">
    <property type="interactions" value="4"/>
</dbReference>
<dbReference type="MINT" id="P56102"/>
<dbReference type="STRING" id="85962.HP_1299"/>
<dbReference type="PaxDb" id="85962-C694_06710"/>
<dbReference type="EnsemblBacteria" id="AAD08340">
    <property type="protein sequence ID" value="AAD08340"/>
    <property type="gene ID" value="HP_1299"/>
</dbReference>
<dbReference type="KEGG" id="heo:C694_06710"/>
<dbReference type="KEGG" id="hpy:HP_1299"/>
<dbReference type="PATRIC" id="fig|85962.47.peg.1393"/>
<dbReference type="eggNOG" id="COG0024">
    <property type="taxonomic scope" value="Bacteria"/>
</dbReference>
<dbReference type="InParanoid" id="P56102"/>
<dbReference type="OrthoDB" id="9802055at2"/>
<dbReference type="PhylomeDB" id="P56102"/>
<dbReference type="Proteomes" id="UP000000429">
    <property type="component" value="Chromosome"/>
</dbReference>
<dbReference type="GO" id="GO:0005829">
    <property type="term" value="C:cytosol"/>
    <property type="evidence" value="ECO:0000318"/>
    <property type="project" value="GO_Central"/>
</dbReference>
<dbReference type="GO" id="GO:0004239">
    <property type="term" value="F:initiator methionyl aminopeptidase activity"/>
    <property type="evidence" value="ECO:0007669"/>
    <property type="project" value="UniProtKB-UniRule"/>
</dbReference>
<dbReference type="GO" id="GO:0046872">
    <property type="term" value="F:metal ion binding"/>
    <property type="evidence" value="ECO:0007669"/>
    <property type="project" value="UniProtKB-UniRule"/>
</dbReference>
<dbReference type="GO" id="GO:0070006">
    <property type="term" value="F:metalloaminopeptidase activity"/>
    <property type="evidence" value="ECO:0000318"/>
    <property type="project" value="GO_Central"/>
</dbReference>
<dbReference type="GO" id="GO:0006508">
    <property type="term" value="P:proteolysis"/>
    <property type="evidence" value="ECO:0007669"/>
    <property type="project" value="UniProtKB-KW"/>
</dbReference>
<dbReference type="CDD" id="cd01086">
    <property type="entry name" value="MetAP1"/>
    <property type="match status" value="1"/>
</dbReference>
<dbReference type="Gene3D" id="3.90.230.10">
    <property type="entry name" value="Creatinase/methionine aminopeptidase superfamily"/>
    <property type="match status" value="1"/>
</dbReference>
<dbReference type="HAMAP" id="MF_01974">
    <property type="entry name" value="MetAP_1"/>
    <property type="match status" value="1"/>
</dbReference>
<dbReference type="InterPro" id="IPR036005">
    <property type="entry name" value="Creatinase/aminopeptidase-like"/>
</dbReference>
<dbReference type="InterPro" id="IPR000994">
    <property type="entry name" value="Pept_M24"/>
</dbReference>
<dbReference type="InterPro" id="IPR001714">
    <property type="entry name" value="Pept_M24_MAP"/>
</dbReference>
<dbReference type="InterPro" id="IPR002467">
    <property type="entry name" value="Pept_M24A_MAP1"/>
</dbReference>
<dbReference type="NCBIfam" id="TIGR00500">
    <property type="entry name" value="met_pdase_I"/>
    <property type="match status" value="1"/>
</dbReference>
<dbReference type="PANTHER" id="PTHR43330">
    <property type="entry name" value="METHIONINE AMINOPEPTIDASE"/>
    <property type="match status" value="1"/>
</dbReference>
<dbReference type="PANTHER" id="PTHR43330:SF27">
    <property type="entry name" value="METHIONINE AMINOPEPTIDASE"/>
    <property type="match status" value="1"/>
</dbReference>
<dbReference type="Pfam" id="PF00557">
    <property type="entry name" value="Peptidase_M24"/>
    <property type="match status" value="1"/>
</dbReference>
<dbReference type="PRINTS" id="PR00599">
    <property type="entry name" value="MAPEPTIDASE"/>
</dbReference>
<dbReference type="SUPFAM" id="SSF55920">
    <property type="entry name" value="Creatinase/aminopeptidase"/>
    <property type="match status" value="1"/>
</dbReference>
<dbReference type="PROSITE" id="PS00680">
    <property type="entry name" value="MAP_1"/>
    <property type="match status" value="1"/>
</dbReference>
<protein>
    <recommendedName>
        <fullName evidence="1">Methionine aminopeptidase</fullName>
        <shortName evidence="1">MAP</shortName>
        <shortName evidence="1">MetAP</shortName>
        <ecNumber evidence="1">3.4.11.18</ecNumber>
    </recommendedName>
    <alternativeName>
        <fullName evidence="1">Peptidase M</fullName>
    </alternativeName>
</protein>
<name>MAP1_HELPY</name>
<proteinExistence type="inferred from homology"/>
<feature type="chain" id="PRO_0000148941" description="Methionine aminopeptidase">
    <location>
        <begin position="1"/>
        <end position="253"/>
    </location>
</feature>
<feature type="binding site" evidence="1">
    <location>
        <position position="78"/>
    </location>
    <ligand>
        <name>substrate</name>
    </ligand>
</feature>
<feature type="binding site" evidence="1">
    <location>
        <position position="95"/>
    </location>
    <ligand>
        <name>a divalent metal cation</name>
        <dbReference type="ChEBI" id="CHEBI:60240"/>
        <label>1</label>
    </ligand>
</feature>
<feature type="binding site" evidence="1">
    <location>
        <position position="106"/>
    </location>
    <ligand>
        <name>a divalent metal cation</name>
        <dbReference type="ChEBI" id="CHEBI:60240"/>
        <label>1</label>
    </ligand>
</feature>
<feature type="binding site" evidence="1">
    <location>
        <position position="106"/>
    </location>
    <ligand>
        <name>a divalent metal cation</name>
        <dbReference type="ChEBI" id="CHEBI:60240"/>
        <label>2</label>
        <note>catalytic</note>
    </ligand>
</feature>
<feature type="binding site" evidence="1">
    <location>
        <position position="169"/>
    </location>
    <ligand>
        <name>a divalent metal cation</name>
        <dbReference type="ChEBI" id="CHEBI:60240"/>
        <label>2</label>
        <note>catalytic</note>
    </ligand>
</feature>
<feature type="binding site" evidence="1">
    <location>
        <position position="176"/>
    </location>
    <ligand>
        <name>substrate</name>
    </ligand>
</feature>
<feature type="binding site" evidence="1">
    <location>
        <position position="206"/>
    </location>
    <ligand>
        <name>a divalent metal cation</name>
        <dbReference type="ChEBI" id="CHEBI:60240"/>
        <label>2</label>
        <note>catalytic</note>
    </ligand>
</feature>
<feature type="binding site" evidence="1">
    <location>
        <position position="237"/>
    </location>
    <ligand>
        <name>a divalent metal cation</name>
        <dbReference type="ChEBI" id="CHEBI:60240"/>
        <label>1</label>
    </ligand>
</feature>
<feature type="binding site" evidence="1">
    <location>
        <position position="237"/>
    </location>
    <ligand>
        <name>a divalent metal cation</name>
        <dbReference type="ChEBI" id="CHEBI:60240"/>
        <label>2</label>
        <note>catalytic</note>
    </ligand>
</feature>
<accession>P56102</accession>
<comment type="function">
    <text evidence="1">Removes the N-terminal methionine from nascent proteins. The N-terminal methionine is often cleaved when the second residue in the primary sequence is small and uncharged (Met-Ala-, Cys, Gly, Pro, Ser, Thr, or Val). Requires deformylation of the N(alpha)-formylated initiator methionine before it can be hydrolyzed.</text>
</comment>
<comment type="catalytic activity">
    <reaction evidence="1">
        <text>Release of N-terminal amino acids, preferentially methionine, from peptides and arylamides.</text>
        <dbReference type="EC" id="3.4.11.18"/>
    </reaction>
</comment>
<comment type="cofactor">
    <cofactor evidence="1">
        <name>Co(2+)</name>
        <dbReference type="ChEBI" id="CHEBI:48828"/>
    </cofactor>
    <cofactor evidence="1">
        <name>Zn(2+)</name>
        <dbReference type="ChEBI" id="CHEBI:29105"/>
    </cofactor>
    <cofactor evidence="1">
        <name>Mn(2+)</name>
        <dbReference type="ChEBI" id="CHEBI:29035"/>
    </cofactor>
    <cofactor evidence="1">
        <name>Fe(2+)</name>
        <dbReference type="ChEBI" id="CHEBI:29033"/>
    </cofactor>
    <text evidence="1">Binds 2 divalent metal cations per subunit. Has a high-affinity and a low affinity metal-binding site. The true nature of the physiological cofactor is under debate. The enzyme is active with cobalt, zinc, manganese or divalent iron ions. Most likely, methionine aminopeptidases function as mononuclear Fe(2+)-metalloproteases under physiological conditions, and the catalytically relevant metal-binding site has been assigned to the histidine-containing high-affinity site.</text>
</comment>
<comment type="subunit">
    <text evidence="1">Monomer.</text>
</comment>
<comment type="similarity">
    <text evidence="1">Belongs to the peptidase M24A family. Methionine aminopeptidase type 1 subfamily.</text>
</comment>
<sequence>MAISIKSPKEIKALRKAGELTAQALALLEREVRPGVSLLELDKMAEDFIKSSHARPAFKGLYGFPNSVCMSLNEVVIHGIPTDYVLQEGDIIGLDLGVEVDGYYGDSALTLPIGAISPQDEKLLACSKESLMHAINSIRVGMHFKELSQILESTITERGFVPLKGFCGHGIGKKPHEEPEIPNYLEKGVKPNSGPKIKEGMVFCLEPMVCQKQGEPKILADKWSVVSVDGLNTSHHEHTIAIVGNKAVILTER</sequence>
<keyword id="KW-0031">Aminopeptidase</keyword>
<keyword id="KW-0378">Hydrolase</keyword>
<keyword id="KW-0479">Metal-binding</keyword>
<keyword id="KW-0645">Protease</keyword>
<keyword id="KW-1185">Reference proteome</keyword>
<organism>
    <name type="scientific">Helicobacter pylori (strain ATCC 700392 / 26695)</name>
    <name type="common">Campylobacter pylori</name>
    <dbReference type="NCBI Taxonomy" id="85962"/>
    <lineage>
        <taxon>Bacteria</taxon>
        <taxon>Pseudomonadati</taxon>
        <taxon>Campylobacterota</taxon>
        <taxon>Epsilonproteobacteria</taxon>
        <taxon>Campylobacterales</taxon>
        <taxon>Helicobacteraceae</taxon>
        <taxon>Helicobacter</taxon>
    </lineage>
</organism>